<name>Y1999_ARCFU</name>
<keyword id="KW-1003">Cell membrane</keyword>
<keyword id="KW-0472">Membrane</keyword>
<keyword id="KW-1185">Reference proteome</keyword>
<keyword id="KW-0812">Transmembrane</keyword>
<keyword id="KW-1133">Transmembrane helix</keyword>
<sequence length="138" mass="16035">MRDMIWTYRALNNPAARRKWTAFILLIVLAGFGYTAYKIAGGAEVGKSLIAAAIFALFISLYAIITLGKPRHYYIEGDYVYYRPFKTNLKDIEGFEVDEERRVIRLKGAGIFSVRTLYFDNEDDLRQAVRRLERIVKR</sequence>
<accession>O28280</accession>
<protein>
    <recommendedName>
        <fullName>Uncharacterized protein AF_1999</fullName>
    </recommendedName>
</protein>
<organism>
    <name type="scientific">Archaeoglobus fulgidus (strain ATCC 49558 / DSM 4304 / JCM 9628 / NBRC 100126 / VC-16)</name>
    <dbReference type="NCBI Taxonomy" id="224325"/>
    <lineage>
        <taxon>Archaea</taxon>
        <taxon>Methanobacteriati</taxon>
        <taxon>Methanobacteriota</taxon>
        <taxon>Archaeoglobi</taxon>
        <taxon>Archaeoglobales</taxon>
        <taxon>Archaeoglobaceae</taxon>
        <taxon>Archaeoglobus</taxon>
    </lineage>
</organism>
<comment type="subcellular location">
    <subcellularLocation>
        <location evidence="2">Cell membrane</location>
        <topology evidence="2">Multi-pass membrane protein</topology>
    </subcellularLocation>
</comment>
<reference key="1">
    <citation type="journal article" date="1997" name="Nature">
        <title>The complete genome sequence of the hyperthermophilic, sulphate-reducing archaeon Archaeoglobus fulgidus.</title>
        <authorList>
            <person name="Klenk H.-P."/>
            <person name="Clayton R.A."/>
            <person name="Tomb J.-F."/>
            <person name="White O."/>
            <person name="Nelson K.E."/>
            <person name="Ketchum K.A."/>
            <person name="Dodson R.J."/>
            <person name="Gwinn M.L."/>
            <person name="Hickey E.K."/>
            <person name="Peterson J.D."/>
            <person name="Richardson D.L."/>
            <person name="Kerlavage A.R."/>
            <person name="Graham D.E."/>
            <person name="Kyrpides N.C."/>
            <person name="Fleischmann R.D."/>
            <person name="Quackenbush J."/>
            <person name="Lee N.H."/>
            <person name="Sutton G.G."/>
            <person name="Gill S.R."/>
            <person name="Kirkness E.F."/>
            <person name="Dougherty B.A."/>
            <person name="McKenney K."/>
            <person name="Adams M.D."/>
            <person name="Loftus B.J."/>
            <person name="Peterson S.N."/>
            <person name="Reich C.I."/>
            <person name="McNeil L.K."/>
            <person name="Badger J.H."/>
            <person name="Glodek A."/>
            <person name="Zhou L."/>
            <person name="Overbeek R."/>
            <person name="Gocayne J.D."/>
            <person name="Weidman J.F."/>
            <person name="McDonald L.A."/>
            <person name="Utterback T.R."/>
            <person name="Cotton M.D."/>
            <person name="Spriggs T."/>
            <person name="Artiach P."/>
            <person name="Kaine B.P."/>
            <person name="Sykes S.M."/>
            <person name="Sadow P.W."/>
            <person name="D'Andrea K.P."/>
            <person name="Bowman C."/>
            <person name="Fujii C."/>
            <person name="Garland S.A."/>
            <person name="Mason T.M."/>
            <person name="Olsen G.J."/>
            <person name="Fraser C.M."/>
            <person name="Smith H.O."/>
            <person name="Woese C.R."/>
            <person name="Venter J.C."/>
        </authorList>
    </citation>
    <scope>NUCLEOTIDE SEQUENCE [LARGE SCALE GENOMIC DNA]</scope>
    <source>
        <strain>ATCC 49558 / DSM 4304 / JCM 9628 / NBRC 100126 / VC-16</strain>
    </source>
</reference>
<proteinExistence type="predicted"/>
<dbReference type="EMBL" id="AE000782">
    <property type="protein sequence ID" value="AAB89256.1"/>
    <property type="molecule type" value="Genomic_DNA"/>
</dbReference>
<dbReference type="PIR" id="F69499">
    <property type="entry name" value="F69499"/>
</dbReference>
<dbReference type="SMR" id="O28280"/>
<dbReference type="STRING" id="224325.AF_1999"/>
<dbReference type="PaxDb" id="224325-AF_1999"/>
<dbReference type="EnsemblBacteria" id="AAB89256">
    <property type="protein sequence ID" value="AAB89256"/>
    <property type="gene ID" value="AF_1999"/>
</dbReference>
<dbReference type="KEGG" id="afu:AF_1999"/>
<dbReference type="eggNOG" id="arCOG10231">
    <property type="taxonomic scope" value="Archaea"/>
</dbReference>
<dbReference type="HOGENOM" id="CLU_1880938_0_0_2"/>
<dbReference type="Proteomes" id="UP000002199">
    <property type="component" value="Chromosome"/>
</dbReference>
<dbReference type="GO" id="GO:0005886">
    <property type="term" value="C:plasma membrane"/>
    <property type="evidence" value="ECO:0007669"/>
    <property type="project" value="UniProtKB-SubCell"/>
</dbReference>
<feature type="chain" id="PRO_0000128081" description="Uncharacterized protein AF_1999">
    <location>
        <begin position="1"/>
        <end position="138"/>
    </location>
</feature>
<feature type="transmembrane region" description="Helical" evidence="1">
    <location>
        <begin position="21"/>
        <end position="43"/>
    </location>
</feature>
<feature type="transmembrane region" description="Helical" evidence="1">
    <location>
        <begin position="48"/>
        <end position="65"/>
    </location>
</feature>
<evidence type="ECO:0000255" key="1"/>
<evidence type="ECO:0000305" key="2"/>
<gene>
    <name type="ordered locus">AF_1999</name>
</gene>